<accession>B0KM52</accession>
<keyword id="KW-0963">Cytoplasm</keyword>
<keyword id="KW-0378">Hydrolase</keyword>
<keyword id="KW-0694">RNA-binding</keyword>
<keyword id="KW-0820">tRNA-binding</keyword>
<evidence type="ECO:0000255" key="1">
    <source>
        <dbReference type="HAMAP-Rule" id="MF_00518"/>
    </source>
</evidence>
<gene>
    <name evidence="1" type="primary">dtd</name>
    <name type="ordered locus">PputGB1_5077</name>
</gene>
<sequence length="145" mass="15663">MRGLLQRVRGARVEVAGEVVGAIDQGLLVLVAVEPEDSREQADKLLHKLLNYRVFSDEQGKMNLSLKDVGGGLLLVSQFTLAADTRNGMRPSFSTAAPPALGAELFDYLLQQANAQHADVASGRFGADMQVHLVNDGPVTFMLQM</sequence>
<protein>
    <recommendedName>
        <fullName evidence="1">D-aminoacyl-tRNA deacylase</fullName>
        <shortName evidence="1">DTD</shortName>
        <ecNumber evidence="1">3.1.1.96</ecNumber>
    </recommendedName>
    <alternativeName>
        <fullName evidence="1">Gly-tRNA(Ala) deacylase</fullName>
    </alternativeName>
</protein>
<proteinExistence type="inferred from homology"/>
<reference key="1">
    <citation type="submission" date="2008-01" db="EMBL/GenBank/DDBJ databases">
        <title>Complete sequence of Pseudomonas putida GB-1.</title>
        <authorList>
            <consortium name="US DOE Joint Genome Institute"/>
            <person name="Copeland A."/>
            <person name="Lucas S."/>
            <person name="Lapidus A."/>
            <person name="Barry K."/>
            <person name="Glavina del Rio T."/>
            <person name="Dalin E."/>
            <person name="Tice H."/>
            <person name="Pitluck S."/>
            <person name="Bruce D."/>
            <person name="Goodwin L."/>
            <person name="Chertkov O."/>
            <person name="Brettin T."/>
            <person name="Detter J.C."/>
            <person name="Han C."/>
            <person name="Kuske C.R."/>
            <person name="Schmutz J."/>
            <person name="Larimer F."/>
            <person name="Land M."/>
            <person name="Hauser L."/>
            <person name="Kyrpides N."/>
            <person name="Kim E."/>
            <person name="McCarthy J.K."/>
            <person name="Richardson P."/>
        </authorList>
    </citation>
    <scope>NUCLEOTIDE SEQUENCE [LARGE SCALE GENOMIC DNA]</scope>
    <source>
        <strain>GB-1</strain>
    </source>
</reference>
<feature type="chain" id="PRO_1000081661" description="D-aminoacyl-tRNA deacylase">
    <location>
        <begin position="1"/>
        <end position="145"/>
    </location>
</feature>
<feature type="short sequence motif" description="Gly-cisPro motif, important for rejection of L-amino acids" evidence="1">
    <location>
        <begin position="137"/>
        <end position="138"/>
    </location>
</feature>
<comment type="function">
    <text evidence="1">An aminoacyl-tRNA editing enzyme that deacylates mischarged D-aminoacyl-tRNAs. Also deacylates mischarged glycyl-tRNA(Ala), protecting cells against glycine mischarging by AlaRS. Acts via tRNA-based rather than protein-based catalysis; rejects L-amino acids rather than detecting D-amino acids in the active site. By recycling D-aminoacyl-tRNA to D-amino acids and free tRNA molecules, this enzyme counteracts the toxicity associated with the formation of D-aminoacyl-tRNA entities in vivo and helps enforce protein L-homochirality.</text>
</comment>
<comment type="catalytic activity">
    <reaction evidence="1">
        <text>glycyl-tRNA(Ala) + H2O = tRNA(Ala) + glycine + H(+)</text>
        <dbReference type="Rhea" id="RHEA:53744"/>
        <dbReference type="Rhea" id="RHEA-COMP:9657"/>
        <dbReference type="Rhea" id="RHEA-COMP:13640"/>
        <dbReference type="ChEBI" id="CHEBI:15377"/>
        <dbReference type="ChEBI" id="CHEBI:15378"/>
        <dbReference type="ChEBI" id="CHEBI:57305"/>
        <dbReference type="ChEBI" id="CHEBI:78442"/>
        <dbReference type="ChEBI" id="CHEBI:78522"/>
        <dbReference type="EC" id="3.1.1.96"/>
    </reaction>
</comment>
<comment type="catalytic activity">
    <reaction evidence="1">
        <text>a D-aminoacyl-tRNA + H2O = a tRNA + a D-alpha-amino acid + H(+)</text>
        <dbReference type="Rhea" id="RHEA:13953"/>
        <dbReference type="Rhea" id="RHEA-COMP:10123"/>
        <dbReference type="Rhea" id="RHEA-COMP:10124"/>
        <dbReference type="ChEBI" id="CHEBI:15377"/>
        <dbReference type="ChEBI" id="CHEBI:15378"/>
        <dbReference type="ChEBI" id="CHEBI:59871"/>
        <dbReference type="ChEBI" id="CHEBI:78442"/>
        <dbReference type="ChEBI" id="CHEBI:79333"/>
        <dbReference type="EC" id="3.1.1.96"/>
    </reaction>
</comment>
<comment type="subunit">
    <text evidence="1">Homodimer.</text>
</comment>
<comment type="subcellular location">
    <subcellularLocation>
        <location evidence="1">Cytoplasm</location>
    </subcellularLocation>
</comment>
<comment type="domain">
    <text evidence="1">A Gly-cisPro motif from one monomer fits into the active site of the other monomer to allow specific chiral rejection of L-amino acids.</text>
</comment>
<comment type="similarity">
    <text evidence="1">Belongs to the DTD family.</text>
</comment>
<dbReference type="EC" id="3.1.1.96" evidence="1"/>
<dbReference type="EMBL" id="CP000926">
    <property type="protein sequence ID" value="ABZ00962.1"/>
    <property type="molecule type" value="Genomic_DNA"/>
</dbReference>
<dbReference type="RefSeq" id="WP_012274583.1">
    <property type="nucleotide sequence ID" value="NC_010322.1"/>
</dbReference>
<dbReference type="SMR" id="B0KM52"/>
<dbReference type="KEGG" id="ppg:PputGB1_5077"/>
<dbReference type="eggNOG" id="COG1490">
    <property type="taxonomic scope" value="Bacteria"/>
</dbReference>
<dbReference type="HOGENOM" id="CLU_076901_1_1_6"/>
<dbReference type="Proteomes" id="UP000002157">
    <property type="component" value="Chromosome"/>
</dbReference>
<dbReference type="GO" id="GO:0005737">
    <property type="term" value="C:cytoplasm"/>
    <property type="evidence" value="ECO:0007669"/>
    <property type="project" value="UniProtKB-SubCell"/>
</dbReference>
<dbReference type="GO" id="GO:0051500">
    <property type="term" value="F:D-tyrosyl-tRNA(Tyr) deacylase activity"/>
    <property type="evidence" value="ECO:0007669"/>
    <property type="project" value="TreeGrafter"/>
</dbReference>
<dbReference type="GO" id="GO:0106026">
    <property type="term" value="F:Gly-tRNA(Ala) deacylase activity"/>
    <property type="evidence" value="ECO:0007669"/>
    <property type="project" value="UniProtKB-UniRule"/>
</dbReference>
<dbReference type="GO" id="GO:0043908">
    <property type="term" value="F:Ser(Gly)-tRNA(Ala) hydrolase activity"/>
    <property type="evidence" value="ECO:0007669"/>
    <property type="project" value="UniProtKB-UniRule"/>
</dbReference>
<dbReference type="GO" id="GO:0000049">
    <property type="term" value="F:tRNA binding"/>
    <property type="evidence" value="ECO:0007669"/>
    <property type="project" value="UniProtKB-UniRule"/>
</dbReference>
<dbReference type="GO" id="GO:0019478">
    <property type="term" value="P:D-amino acid catabolic process"/>
    <property type="evidence" value="ECO:0007669"/>
    <property type="project" value="UniProtKB-UniRule"/>
</dbReference>
<dbReference type="CDD" id="cd00563">
    <property type="entry name" value="Dtyr_deacylase"/>
    <property type="match status" value="1"/>
</dbReference>
<dbReference type="FunFam" id="3.50.80.10:FF:000001">
    <property type="entry name" value="D-aminoacyl-tRNA deacylase"/>
    <property type="match status" value="1"/>
</dbReference>
<dbReference type="Gene3D" id="3.50.80.10">
    <property type="entry name" value="D-tyrosyl-tRNA(Tyr) deacylase"/>
    <property type="match status" value="1"/>
</dbReference>
<dbReference type="HAMAP" id="MF_00518">
    <property type="entry name" value="Deacylase_Dtd"/>
    <property type="match status" value="1"/>
</dbReference>
<dbReference type="InterPro" id="IPR003732">
    <property type="entry name" value="Daa-tRNA_deacyls_DTD"/>
</dbReference>
<dbReference type="InterPro" id="IPR023509">
    <property type="entry name" value="DTD-like_sf"/>
</dbReference>
<dbReference type="NCBIfam" id="TIGR00256">
    <property type="entry name" value="D-aminoacyl-tRNA deacylase"/>
    <property type="match status" value="1"/>
</dbReference>
<dbReference type="PANTHER" id="PTHR10472:SF5">
    <property type="entry name" value="D-AMINOACYL-TRNA DEACYLASE 1"/>
    <property type="match status" value="1"/>
</dbReference>
<dbReference type="PANTHER" id="PTHR10472">
    <property type="entry name" value="D-TYROSYL-TRNA TYR DEACYLASE"/>
    <property type="match status" value="1"/>
</dbReference>
<dbReference type="Pfam" id="PF02580">
    <property type="entry name" value="Tyr_Deacylase"/>
    <property type="match status" value="1"/>
</dbReference>
<dbReference type="SUPFAM" id="SSF69500">
    <property type="entry name" value="DTD-like"/>
    <property type="match status" value="1"/>
</dbReference>
<organism>
    <name type="scientific">Pseudomonas putida (strain GB-1)</name>
    <dbReference type="NCBI Taxonomy" id="76869"/>
    <lineage>
        <taxon>Bacteria</taxon>
        <taxon>Pseudomonadati</taxon>
        <taxon>Pseudomonadota</taxon>
        <taxon>Gammaproteobacteria</taxon>
        <taxon>Pseudomonadales</taxon>
        <taxon>Pseudomonadaceae</taxon>
        <taxon>Pseudomonas</taxon>
    </lineage>
</organism>
<name>DTD_PSEPG</name>